<evidence type="ECO:0000255" key="1">
    <source>
        <dbReference type="HAMAP-Rule" id="MF_01849"/>
    </source>
</evidence>
<evidence type="ECO:0000255" key="2">
    <source>
        <dbReference type="PROSITE-ProRule" id="PRU01266"/>
    </source>
</evidence>
<feature type="chain" id="PRO_0000350089" description="Probable dual-specificity RNA methyltransferase RlmN">
    <location>
        <begin position="1"/>
        <end position="344"/>
    </location>
</feature>
<feature type="domain" description="Radical SAM core" evidence="2">
    <location>
        <begin position="96"/>
        <end position="326"/>
    </location>
</feature>
<feature type="active site" description="Proton acceptor" evidence="1">
    <location>
        <position position="90"/>
    </location>
</feature>
<feature type="active site" description="S-methylcysteine intermediate" evidence="1">
    <location>
        <position position="331"/>
    </location>
</feature>
<feature type="binding site" evidence="1">
    <location>
        <position position="110"/>
    </location>
    <ligand>
        <name>[4Fe-4S] cluster</name>
        <dbReference type="ChEBI" id="CHEBI:49883"/>
        <note>4Fe-4S-S-AdoMet</note>
    </ligand>
</feature>
<feature type="binding site" evidence="1">
    <location>
        <position position="114"/>
    </location>
    <ligand>
        <name>[4Fe-4S] cluster</name>
        <dbReference type="ChEBI" id="CHEBI:49883"/>
        <note>4Fe-4S-S-AdoMet</note>
    </ligand>
</feature>
<feature type="binding site" evidence="1">
    <location>
        <position position="117"/>
    </location>
    <ligand>
        <name>[4Fe-4S] cluster</name>
        <dbReference type="ChEBI" id="CHEBI:49883"/>
        <note>4Fe-4S-S-AdoMet</note>
    </ligand>
</feature>
<feature type="binding site" evidence="1">
    <location>
        <begin position="157"/>
        <end position="158"/>
    </location>
    <ligand>
        <name>S-adenosyl-L-methionine</name>
        <dbReference type="ChEBI" id="CHEBI:59789"/>
    </ligand>
</feature>
<feature type="binding site" evidence="1">
    <location>
        <position position="189"/>
    </location>
    <ligand>
        <name>S-adenosyl-L-methionine</name>
        <dbReference type="ChEBI" id="CHEBI:59789"/>
    </ligand>
</feature>
<feature type="binding site" evidence="1">
    <location>
        <begin position="212"/>
        <end position="214"/>
    </location>
    <ligand>
        <name>S-adenosyl-L-methionine</name>
        <dbReference type="ChEBI" id="CHEBI:59789"/>
    </ligand>
</feature>
<feature type="binding site" evidence="1">
    <location>
        <position position="288"/>
    </location>
    <ligand>
        <name>S-adenosyl-L-methionine</name>
        <dbReference type="ChEBI" id="CHEBI:59789"/>
    </ligand>
</feature>
<feature type="disulfide bond" description="(transient)" evidence="1">
    <location>
        <begin position="103"/>
        <end position="331"/>
    </location>
</feature>
<organism>
    <name type="scientific">Caldicellulosiruptor saccharolyticus (strain ATCC 43494 / DSM 8903 / Tp8T 6331)</name>
    <dbReference type="NCBI Taxonomy" id="351627"/>
    <lineage>
        <taxon>Bacteria</taxon>
        <taxon>Bacillati</taxon>
        <taxon>Bacillota</taxon>
        <taxon>Bacillota incertae sedis</taxon>
        <taxon>Caldicellulosiruptorales</taxon>
        <taxon>Caldicellulosiruptoraceae</taxon>
        <taxon>Caldicellulosiruptor</taxon>
    </lineage>
</organism>
<comment type="function">
    <text evidence="1">Specifically methylates position 2 of adenine 2503 in 23S rRNA and position 2 of adenine 37 in tRNAs.</text>
</comment>
<comment type="catalytic activity">
    <reaction evidence="1">
        <text>adenosine(2503) in 23S rRNA + 2 reduced [2Fe-2S]-[ferredoxin] + 2 S-adenosyl-L-methionine = 2-methyladenosine(2503) in 23S rRNA + 5'-deoxyadenosine + L-methionine + 2 oxidized [2Fe-2S]-[ferredoxin] + S-adenosyl-L-homocysteine</text>
        <dbReference type="Rhea" id="RHEA:42916"/>
        <dbReference type="Rhea" id="RHEA-COMP:10000"/>
        <dbReference type="Rhea" id="RHEA-COMP:10001"/>
        <dbReference type="Rhea" id="RHEA-COMP:10152"/>
        <dbReference type="Rhea" id="RHEA-COMP:10282"/>
        <dbReference type="ChEBI" id="CHEBI:17319"/>
        <dbReference type="ChEBI" id="CHEBI:33737"/>
        <dbReference type="ChEBI" id="CHEBI:33738"/>
        <dbReference type="ChEBI" id="CHEBI:57844"/>
        <dbReference type="ChEBI" id="CHEBI:57856"/>
        <dbReference type="ChEBI" id="CHEBI:59789"/>
        <dbReference type="ChEBI" id="CHEBI:74411"/>
        <dbReference type="ChEBI" id="CHEBI:74497"/>
        <dbReference type="EC" id="2.1.1.192"/>
    </reaction>
</comment>
<comment type="catalytic activity">
    <reaction evidence="1">
        <text>adenosine(37) in tRNA + 2 reduced [2Fe-2S]-[ferredoxin] + 2 S-adenosyl-L-methionine = 2-methyladenosine(37) in tRNA + 5'-deoxyadenosine + L-methionine + 2 oxidized [2Fe-2S]-[ferredoxin] + S-adenosyl-L-homocysteine</text>
        <dbReference type="Rhea" id="RHEA:43332"/>
        <dbReference type="Rhea" id="RHEA-COMP:10000"/>
        <dbReference type="Rhea" id="RHEA-COMP:10001"/>
        <dbReference type="Rhea" id="RHEA-COMP:10162"/>
        <dbReference type="Rhea" id="RHEA-COMP:10485"/>
        <dbReference type="ChEBI" id="CHEBI:17319"/>
        <dbReference type="ChEBI" id="CHEBI:33737"/>
        <dbReference type="ChEBI" id="CHEBI:33738"/>
        <dbReference type="ChEBI" id="CHEBI:57844"/>
        <dbReference type="ChEBI" id="CHEBI:57856"/>
        <dbReference type="ChEBI" id="CHEBI:59789"/>
        <dbReference type="ChEBI" id="CHEBI:74411"/>
        <dbReference type="ChEBI" id="CHEBI:74497"/>
        <dbReference type="EC" id="2.1.1.192"/>
    </reaction>
</comment>
<comment type="cofactor">
    <cofactor evidence="1">
        <name>[4Fe-4S] cluster</name>
        <dbReference type="ChEBI" id="CHEBI:49883"/>
    </cofactor>
    <text evidence="1">Binds 1 [4Fe-4S] cluster. The cluster is coordinated with 3 cysteines and an exchangeable S-adenosyl-L-methionine.</text>
</comment>
<comment type="subcellular location">
    <subcellularLocation>
        <location evidence="1">Cytoplasm</location>
    </subcellularLocation>
</comment>
<comment type="miscellaneous">
    <text evidence="1">Reaction proceeds by a ping-pong mechanism involving intermediate methylation of a conserved cysteine residue.</text>
</comment>
<comment type="similarity">
    <text evidence="1">Belongs to the radical SAM superfamily. RlmN family.</text>
</comment>
<protein>
    <recommendedName>
        <fullName evidence="1">Probable dual-specificity RNA methyltransferase RlmN</fullName>
        <ecNumber evidence="1">2.1.1.192</ecNumber>
    </recommendedName>
    <alternativeName>
        <fullName evidence="1">23S rRNA (adenine(2503)-C(2))-methyltransferase</fullName>
    </alternativeName>
    <alternativeName>
        <fullName evidence="1">23S rRNA m2A2503 methyltransferase</fullName>
    </alternativeName>
    <alternativeName>
        <fullName evidence="1">Ribosomal RNA large subunit methyltransferase N</fullName>
    </alternativeName>
    <alternativeName>
        <fullName evidence="1">tRNA (adenine(37)-C(2))-methyltransferase</fullName>
    </alternativeName>
    <alternativeName>
        <fullName evidence="1">tRNA m2A37 methyltransferase</fullName>
    </alternativeName>
</protein>
<gene>
    <name evidence="1" type="primary">rlmN</name>
    <name type="ordered locus">Csac_2078</name>
</gene>
<proteinExistence type="inferred from homology"/>
<keyword id="KW-0004">4Fe-4S</keyword>
<keyword id="KW-0963">Cytoplasm</keyword>
<keyword id="KW-1015">Disulfide bond</keyword>
<keyword id="KW-0408">Iron</keyword>
<keyword id="KW-0411">Iron-sulfur</keyword>
<keyword id="KW-0479">Metal-binding</keyword>
<keyword id="KW-0489">Methyltransferase</keyword>
<keyword id="KW-0698">rRNA processing</keyword>
<keyword id="KW-0949">S-adenosyl-L-methionine</keyword>
<keyword id="KW-0808">Transferase</keyword>
<keyword id="KW-0819">tRNA processing</keyword>
<name>RLMN_CALS8</name>
<dbReference type="EC" id="2.1.1.192" evidence="1"/>
<dbReference type="EMBL" id="CP000679">
    <property type="protein sequence ID" value="ABP67663.1"/>
    <property type="molecule type" value="Genomic_DNA"/>
</dbReference>
<dbReference type="RefSeq" id="WP_011917598.1">
    <property type="nucleotide sequence ID" value="NC_009437.1"/>
</dbReference>
<dbReference type="SMR" id="A4XL78"/>
<dbReference type="STRING" id="351627.Csac_2078"/>
<dbReference type="KEGG" id="csc:Csac_2078"/>
<dbReference type="eggNOG" id="COG0820">
    <property type="taxonomic scope" value="Bacteria"/>
</dbReference>
<dbReference type="HOGENOM" id="CLU_029101_0_1_9"/>
<dbReference type="OrthoDB" id="9793973at2"/>
<dbReference type="Proteomes" id="UP000000256">
    <property type="component" value="Chromosome"/>
</dbReference>
<dbReference type="GO" id="GO:0005737">
    <property type="term" value="C:cytoplasm"/>
    <property type="evidence" value="ECO:0007669"/>
    <property type="project" value="UniProtKB-SubCell"/>
</dbReference>
<dbReference type="GO" id="GO:0051539">
    <property type="term" value="F:4 iron, 4 sulfur cluster binding"/>
    <property type="evidence" value="ECO:0007669"/>
    <property type="project" value="UniProtKB-UniRule"/>
</dbReference>
<dbReference type="GO" id="GO:0046872">
    <property type="term" value="F:metal ion binding"/>
    <property type="evidence" value="ECO:0007669"/>
    <property type="project" value="UniProtKB-KW"/>
</dbReference>
<dbReference type="GO" id="GO:0070040">
    <property type="term" value="F:rRNA (adenine(2503)-C2-)-methyltransferase activity"/>
    <property type="evidence" value="ECO:0007669"/>
    <property type="project" value="UniProtKB-UniRule"/>
</dbReference>
<dbReference type="GO" id="GO:0019843">
    <property type="term" value="F:rRNA binding"/>
    <property type="evidence" value="ECO:0007669"/>
    <property type="project" value="UniProtKB-UniRule"/>
</dbReference>
<dbReference type="GO" id="GO:0002935">
    <property type="term" value="F:tRNA (adenine(37)-C2)-methyltransferase activity"/>
    <property type="evidence" value="ECO:0007669"/>
    <property type="project" value="UniProtKB-UniRule"/>
</dbReference>
<dbReference type="GO" id="GO:0000049">
    <property type="term" value="F:tRNA binding"/>
    <property type="evidence" value="ECO:0007669"/>
    <property type="project" value="UniProtKB-UniRule"/>
</dbReference>
<dbReference type="GO" id="GO:0070475">
    <property type="term" value="P:rRNA base methylation"/>
    <property type="evidence" value="ECO:0007669"/>
    <property type="project" value="UniProtKB-UniRule"/>
</dbReference>
<dbReference type="GO" id="GO:0030488">
    <property type="term" value="P:tRNA methylation"/>
    <property type="evidence" value="ECO:0007669"/>
    <property type="project" value="UniProtKB-UniRule"/>
</dbReference>
<dbReference type="CDD" id="cd01335">
    <property type="entry name" value="Radical_SAM"/>
    <property type="match status" value="1"/>
</dbReference>
<dbReference type="FunFam" id="3.20.20.70:FF:000014">
    <property type="entry name" value="Probable dual-specificity RNA methyltransferase RlmN"/>
    <property type="match status" value="1"/>
</dbReference>
<dbReference type="Gene3D" id="1.10.150.530">
    <property type="match status" value="1"/>
</dbReference>
<dbReference type="Gene3D" id="3.20.20.70">
    <property type="entry name" value="Aldolase class I"/>
    <property type="match status" value="1"/>
</dbReference>
<dbReference type="HAMAP" id="MF_01849">
    <property type="entry name" value="RNA_methyltr_RlmN"/>
    <property type="match status" value="1"/>
</dbReference>
<dbReference type="InterPro" id="IPR013785">
    <property type="entry name" value="Aldolase_TIM"/>
</dbReference>
<dbReference type="InterPro" id="IPR040072">
    <property type="entry name" value="Methyltransferase_A"/>
</dbReference>
<dbReference type="InterPro" id="IPR048641">
    <property type="entry name" value="RlmN_N"/>
</dbReference>
<dbReference type="InterPro" id="IPR027492">
    <property type="entry name" value="RNA_MTrfase_RlmN"/>
</dbReference>
<dbReference type="InterPro" id="IPR004383">
    <property type="entry name" value="rRNA_lsu_MTrfase_RlmN/Cfr"/>
</dbReference>
<dbReference type="InterPro" id="IPR007197">
    <property type="entry name" value="rSAM"/>
</dbReference>
<dbReference type="NCBIfam" id="TIGR00048">
    <property type="entry name" value="rRNA_mod_RlmN"/>
    <property type="match status" value="1"/>
</dbReference>
<dbReference type="PANTHER" id="PTHR30544">
    <property type="entry name" value="23S RRNA METHYLTRANSFERASE"/>
    <property type="match status" value="1"/>
</dbReference>
<dbReference type="PANTHER" id="PTHR30544:SF5">
    <property type="entry name" value="RADICAL SAM CORE DOMAIN-CONTAINING PROTEIN"/>
    <property type="match status" value="1"/>
</dbReference>
<dbReference type="Pfam" id="PF04055">
    <property type="entry name" value="Radical_SAM"/>
    <property type="match status" value="1"/>
</dbReference>
<dbReference type="Pfam" id="PF21016">
    <property type="entry name" value="RlmN_N"/>
    <property type="match status" value="1"/>
</dbReference>
<dbReference type="PIRSF" id="PIRSF006004">
    <property type="entry name" value="CHP00048"/>
    <property type="match status" value="1"/>
</dbReference>
<dbReference type="SFLD" id="SFLDF00275">
    <property type="entry name" value="adenosine_C2_methyltransferase"/>
    <property type="match status" value="1"/>
</dbReference>
<dbReference type="SFLD" id="SFLDG01062">
    <property type="entry name" value="methyltransferase_(Class_A)"/>
    <property type="match status" value="1"/>
</dbReference>
<dbReference type="SUPFAM" id="SSF102114">
    <property type="entry name" value="Radical SAM enzymes"/>
    <property type="match status" value="1"/>
</dbReference>
<dbReference type="PROSITE" id="PS51918">
    <property type="entry name" value="RADICAL_SAM"/>
    <property type="match status" value="1"/>
</dbReference>
<sequence length="344" mass="39023">MKRLIKDFTFDELKKWVEETGEKPFRANQIFEWLYKKNATDVNSFTNIPTQLRKRIEEEFILNSLRVVKYESDGESIKFLLELVDGNAIESVFLPYKYGNAICISTQVGCRMKCAFCASTIGGMIRNLSAGEMVDQIVNIENITKKKISNVVLMGSGEPFDNIENVFKFIDIINSKEGKNIGARHITISTVGIVDGIYKLSEYPKQVNLAISLHAPNNNLRNKLVPMNRKYSIEDILKAVDYYISKTNRRVTFEYALIDGVNDSIECANELAKILSGKLVHVNLIPVNPVNGRNFKKPPKERVKEFYNVLILSGIQVTIRRELGSSIAAACGQLRSRHYNISEK</sequence>
<reference key="1">
    <citation type="submission" date="2007-04" db="EMBL/GenBank/DDBJ databases">
        <title>Genome sequence of the thermophilic hydrogen-producing bacterium Caldicellulosiruptor saccharolyticus DSM 8903.</title>
        <authorList>
            <person name="Copeland A."/>
            <person name="Lucas S."/>
            <person name="Lapidus A."/>
            <person name="Barry K."/>
            <person name="Detter J.C."/>
            <person name="Glavina del Rio T."/>
            <person name="Hammon N."/>
            <person name="Israni S."/>
            <person name="Dalin E."/>
            <person name="Tice H."/>
            <person name="Pitluck S."/>
            <person name="Kiss H."/>
            <person name="Brettin T."/>
            <person name="Bruce D."/>
            <person name="Han C."/>
            <person name="Schmutz J."/>
            <person name="Larimer F."/>
            <person name="Land M."/>
            <person name="Hauser L."/>
            <person name="Kyrpides N."/>
            <person name="Lykidis A."/>
            <person name="van de Werken H.J.G."/>
            <person name="Verhaart M.R.A."/>
            <person name="VanFossen A.L."/>
            <person name="Lewis D.L."/>
            <person name="Nichols J.D."/>
            <person name="Goorissen H.P."/>
            <person name="van Niel E.W.J."/>
            <person name="Stams F.J.M."/>
            <person name="Willquist K.U."/>
            <person name="Ward D.E."/>
            <person name="van der Oost J."/>
            <person name="Kelly R.M."/>
            <person name="Kengen S.M.W."/>
            <person name="Richardson P."/>
        </authorList>
    </citation>
    <scope>NUCLEOTIDE SEQUENCE [LARGE SCALE GENOMIC DNA]</scope>
    <source>
        <strain>ATCC 43494 / DSM 8903 / Tp8T 6331</strain>
    </source>
</reference>
<accession>A4XL78</accession>